<reference key="1">
    <citation type="journal article" date="2001" name="Science">
        <title>Comparative genomics of Listeria species.</title>
        <authorList>
            <person name="Glaser P."/>
            <person name="Frangeul L."/>
            <person name="Buchrieser C."/>
            <person name="Rusniok C."/>
            <person name="Amend A."/>
            <person name="Baquero F."/>
            <person name="Berche P."/>
            <person name="Bloecker H."/>
            <person name="Brandt P."/>
            <person name="Chakraborty T."/>
            <person name="Charbit A."/>
            <person name="Chetouani F."/>
            <person name="Couve E."/>
            <person name="de Daruvar A."/>
            <person name="Dehoux P."/>
            <person name="Domann E."/>
            <person name="Dominguez-Bernal G."/>
            <person name="Duchaud E."/>
            <person name="Durant L."/>
            <person name="Dussurget O."/>
            <person name="Entian K.-D."/>
            <person name="Fsihi H."/>
            <person name="Garcia-del Portillo F."/>
            <person name="Garrido P."/>
            <person name="Gautier L."/>
            <person name="Goebel W."/>
            <person name="Gomez-Lopez N."/>
            <person name="Hain T."/>
            <person name="Hauf J."/>
            <person name="Jackson D."/>
            <person name="Jones L.-M."/>
            <person name="Kaerst U."/>
            <person name="Kreft J."/>
            <person name="Kuhn M."/>
            <person name="Kunst F."/>
            <person name="Kurapkat G."/>
            <person name="Madueno E."/>
            <person name="Maitournam A."/>
            <person name="Mata Vicente J."/>
            <person name="Ng E."/>
            <person name="Nedjari H."/>
            <person name="Nordsiek G."/>
            <person name="Novella S."/>
            <person name="de Pablos B."/>
            <person name="Perez-Diaz J.-C."/>
            <person name="Purcell R."/>
            <person name="Remmel B."/>
            <person name="Rose M."/>
            <person name="Schlueter T."/>
            <person name="Simoes N."/>
            <person name="Tierrez A."/>
            <person name="Vazquez-Boland J.-A."/>
            <person name="Voss H."/>
            <person name="Wehland J."/>
            <person name="Cossart P."/>
        </authorList>
    </citation>
    <scope>NUCLEOTIDE SEQUENCE [LARGE SCALE GENOMIC DNA]</scope>
    <source>
        <strain>ATCC BAA-680 / CLIP 11262</strain>
    </source>
</reference>
<name>NDK_LISIN</name>
<protein>
    <recommendedName>
        <fullName evidence="1">Nucleoside diphosphate kinase</fullName>
        <shortName evidence="1">NDK</shortName>
        <shortName evidence="1">NDP kinase</shortName>
        <ecNumber evidence="1">2.7.4.6</ecNumber>
    </recommendedName>
    <alternativeName>
        <fullName evidence="1">Nucleoside-2-P kinase</fullName>
    </alternativeName>
</protein>
<organism>
    <name type="scientific">Listeria innocua serovar 6a (strain ATCC BAA-680 / CLIP 11262)</name>
    <dbReference type="NCBI Taxonomy" id="272626"/>
    <lineage>
        <taxon>Bacteria</taxon>
        <taxon>Bacillati</taxon>
        <taxon>Bacillota</taxon>
        <taxon>Bacilli</taxon>
        <taxon>Bacillales</taxon>
        <taxon>Listeriaceae</taxon>
        <taxon>Listeria</taxon>
    </lineage>
</organism>
<dbReference type="EC" id="2.7.4.6" evidence="1"/>
<dbReference type="EMBL" id="AL596170">
    <property type="protein sequence ID" value="CAC97273.1"/>
    <property type="molecule type" value="Genomic_DNA"/>
</dbReference>
<dbReference type="PIR" id="AI1687">
    <property type="entry name" value="AI1687"/>
</dbReference>
<dbReference type="RefSeq" id="WP_003763122.1">
    <property type="nucleotide sequence ID" value="NC_003212.1"/>
</dbReference>
<dbReference type="SMR" id="Q92A79"/>
<dbReference type="STRING" id="272626.gene:17566401"/>
<dbReference type="GeneID" id="93235382"/>
<dbReference type="KEGG" id="lin:ndk"/>
<dbReference type="eggNOG" id="COG0105">
    <property type="taxonomic scope" value="Bacteria"/>
</dbReference>
<dbReference type="HOGENOM" id="CLU_060216_6_3_9"/>
<dbReference type="OrthoDB" id="9801161at2"/>
<dbReference type="Proteomes" id="UP000002513">
    <property type="component" value="Chromosome"/>
</dbReference>
<dbReference type="GO" id="GO:0005737">
    <property type="term" value="C:cytoplasm"/>
    <property type="evidence" value="ECO:0007669"/>
    <property type="project" value="UniProtKB-SubCell"/>
</dbReference>
<dbReference type="GO" id="GO:0005524">
    <property type="term" value="F:ATP binding"/>
    <property type="evidence" value="ECO:0007669"/>
    <property type="project" value="UniProtKB-UniRule"/>
</dbReference>
<dbReference type="GO" id="GO:0046872">
    <property type="term" value="F:metal ion binding"/>
    <property type="evidence" value="ECO:0007669"/>
    <property type="project" value="UniProtKB-KW"/>
</dbReference>
<dbReference type="GO" id="GO:0004550">
    <property type="term" value="F:nucleoside diphosphate kinase activity"/>
    <property type="evidence" value="ECO:0007669"/>
    <property type="project" value="UniProtKB-UniRule"/>
</dbReference>
<dbReference type="GO" id="GO:0006241">
    <property type="term" value="P:CTP biosynthetic process"/>
    <property type="evidence" value="ECO:0007669"/>
    <property type="project" value="UniProtKB-UniRule"/>
</dbReference>
<dbReference type="GO" id="GO:0006183">
    <property type="term" value="P:GTP biosynthetic process"/>
    <property type="evidence" value="ECO:0007669"/>
    <property type="project" value="UniProtKB-UniRule"/>
</dbReference>
<dbReference type="GO" id="GO:0006228">
    <property type="term" value="P:UTP biosynthetic process"/>
    <property type="evidence" value="ECO:0007669"/>
    <property type="project" value="UniProtKB-UniRule"/>
</dbReference>
<dbReference type="CDD" id="cd04413">
    <property type="entry name" value="NDPk_I"/>
    <property type="match status" value="1"/>
</dbReference>
<dbReference type="FunFam" id="3.30.70.141:FF:000003">
    <property type="entry name" value="Nucleoside diphosphate kinase"/>
    <property type="match status" value="1"/>
</dbReference>
<dbReference type="Gene3D" id="3.30.70.141">
    <property type="entry name" value="Nucleoside diphosphate kinase-like domain"/>
    <property type="match status" value="1"/>
</dbReference>
<dbReference type="HAMAP" id="MF_00451">
    <property type="entry name" value="NDP_kinase"/>
    <property type="match status" value="1"/>
</dbReference>
<dbReference type="InterPro" id="IPR034907">
    <property type="entry name" value="NDK-like_dom"/>
</dbReference>
<dbReference type="InterPro" id="IPR036850">
    <property type="entry name" value="NDK-like_dom_sf"/>
</dbReference>
<dbReference type="InterPro" id="IPR001564">
    <property type="entry name" value="Nucleoside_diP_kinase"/>
</dbReference>
<dbReference type="InterPro" id="IPR023005">
    <property type="entry name" value="Nucleoside_diP_kinase_AS"/>
</dbReference>
<dbReference type="NCBIfam" id="NF001908">
    <property type="entry name" value="PRK00668.1"/>
    <property type="match status" value="1"/>
</dbReference>
<dbReference type="PANTHER" id="PTHR11349">
    <property type="entry name" value="NUCLEOSIDE DIPHOSPHATE KINASE"/>
    <property type="match status" value="1"/>
</dbReference>
<dbReference type="Pfam" id="PF00334">
    <property type="entry name" value="NDK"/>
    <property type="match status" value="1"/>
</dbReference>
<dbReference type="PRINTS" id="PR01243">
    <property type="entry name" value="NUCDPKINASE"/>
</dbReference>
<dbReference type="SMART" id="SM00562">
    <property type="entry name" value="NDK"/>
    <property type="match status" value="1"/>
</dbReference>
<dbReference type="SUPFAM" id="SSF54919">
    <property type="entry name" value="Nucleoside diphosphate kinase, NDK"/>
    <property type="match status" value="1"/>
</dbReference>
<dbReference type="PROSITE" id="PS00469">
    <property type="entry name" value="NDPK"/>
    <property type="match status" value="1"/>
</dbReference>
<dbReference type="PROSITE" id="PS51374">
    <property type="entry name" value="NDPK_LIKE"/>
    <property type="match status" value="1"/>
</dbReference>
<gene>
    <name evidence="1" type="primary">ndk</name>
    <name type="ordered locus">lin2043</name>
</gene>
<comment type="function">
    <text evidence="1">Major role in the synthesis of nucleoside triphosphates other than ATP. The ATP gamma phosphate is transferred to the NDP beta phosphate via a ping-pong mechanism, using a phosphorylated active-site intermediate.</text>
</comment>
<comment type="catalytic activity">
    <reaction evidence="1">
        <text>a 2'-deoxyribonucleoside 5'-diphosphate + ATP = a 2'-deoxyribonucleoside 5'-triphosphate + ADP</text>
        <dbReference type="Rhea" id="RHEA:44640"/>
        <dbReference type="ChEBI" id="CHEBI:30616"/>
        <dbReference type="ChEBI" id="CHEBI:61560"/>
        <dbReference type="ChEBI" id="CHEBI:73316"/>
        <dbReference type="ChEBI" id="CHEBI:456216"/>
        <dbReference type="EC" id="2.7.4.6"/>
    </reaction>
</comment>
<comment type="catalytic activity">
    <reaction evidence="1">
        <text>a ribonucleoside 5'-diphosphate + ATP = a ribonucleoside 5'-triphosphate + ADP</text>
        <dbReference type="Rhea" id="RHEA:18113"/>
        <dbReference type="ChEBI" id="CHEBI:30616"/>
        <dbReference type="ChEBI" id="CHEBI:57930"/>
        <dbReference type="ChEBI" id="CHEBI:61557"/>
        <dbReference type="ChEBI" id="CHEBI:456216"/>
        <dbReference type="EC" id="2.7.4.6"/>
    </reaction>
</comment>
<comment type="cofactor">
    <cofactor evidence="1">
        <name>Mg(2+)</name>
        <dbReference type="ChEBI" id="CHEBI:18420"/>
    </cofactor>
</comment>
<comment type="subunit">
    <text evidence="1">Homotetramer.</text>
</comment>
<comment type="subcellular location">
    <subcellularLocation>
        <location evidence="1">Cytoplasm</location>
    </subcellularLocation>
</comment>
<comment type="similarity">
    <text evidence="1">Belongs to the NDK family.</text>
</comment>
<accession>Q92A79</accession>
<keyword id="KW-0067">ATP-binding</keyword>
<keyword id="KW-0963">Cytoplasm</keyword>
<keyword id="KW-0418">Kinase</keyword>
<keyword id="KW-0460">Magnesium</keyword>
<keyword id="KW-0479">Metal-binding</keyword>
<keyword id="KW-0546">Nucleotide metabolism</keyword>
<keyword id="KW-0547">Nucleotide-binding</keyword>
<keyword id="KW-0597">Phosphoprotein</keyword>
<keyword id="KW-0808">Transferase</keyword>
<evidence type="ECO:0000255" key="1">
    <source>
        <dbReference type="HAMAP-Rule" id="MF_00451"/>
    </source>
</evidence>
<feature type="chain" id="PRO_0000137000" description="Nucleoside diphosphate kinase">
    <location>
        <begin position="1"/>
        <end position="147"/>
    </location>
</feature>
<feature type="active site" description="Pros-phosphohistidine intermediate" evidence="1">
    <location>
        <position position="115"/>
    </location>
</feature>
<feature type="binding site" evidence="1">
    <location>
        <position position="9"/>
    </location>
    <ligand>
        <name>ATP</name>
        <dbReference type="ChEBI" id="CHEBI:30616"/>
    </ligand>
</feature>
<feature type="binding site" evidence="1">
    <location>
        <position position="57"/>
    </location>
    <ligand>
        <name>ATP</name>
        <dbReference type="ChEBI" id="CHEBI:30616"/>
    </ligand>
</feature>
<feature type="binding site" evidence="1">
    <location>
        <position position="85"/>
    </location>
    <ligand>
        <name>ATP</name>
        <dbReference type="ChEBI" id="CHEBI:30616"/>
    </ligand>
</feature>
<feature type="binding site" evidence="1">
    <location>
        <position position="91"/>
    </location>
    <ligand>
        <name>ATP</name>
        <dbReference type="ChEBI" id="CHEBI:30616"/>
    </ligand>
</feature>
<feature type="binding site" evidence="1">
    <location>
        <position position="102"/>
    </location>
    <ligand>
        <name>ATP</name>
        <dbReference type="ChEBI" id="CHEBI:30616"/>
    </ligand>
</feature>
<feature type="binding site" evidence="1">
    <location>
        <position position="112"/>
    </location>
    <ligand>
        <name>ATP</name>
        <dbReference type="ChEBI" id="CHEBI:30616"/>
    </ligand>
</feature>
<proteinExistence type="inferred from homology"/>
<sequence>MEQTYVMVKPDGVERGLIGEIVAKIEKKGIKLVAGKLMQIDRTLAEQHYAEHIGKPFFEDLIGFITSGPVFAMVLEGDDVIKTARRMMGKTNPLEADPGTIRAEYAIHTNRNVIHGSDSPESAKREIQLFFEPHEILSYEKAVDTWI</sequence>